<evidence type="ECO:0000255" key="1">
    <source>
        <dbReference type="HAMAP-Rule" id="MF_00197"/>
    </source>
</evidence>
<organism>
    <name type="scientific">Pseudomonas aeruginosa (strain UCBPP-PA14)</name>
    <dbReference type="NCBI Taxonomy" id="208963"/>
    <lineage>
        <taxon>Bacteria</taxon>
        <taxon>Pseudomonadati</taxon>
        <taxon>Pseudomonadota</taxon>
        <taxon>Gammaproteobacteria</taxon>
        <taxon>Pseudomonadales</taxon>
        <taxon>Pseudomonadaceae</taxon>
        <taxon>Pseudomonas</taxon>
    </lineage>
</organism>
<protein>
    <recommendedName>
        <fullName evidence="1">Diaminopimelate epimerase</fullName>
        <shortName evidence="1">DAP epimerase</shortName>
        <ecNumber evidence="1">5.1.1.7</ecNumber>
    </recommendedName>
    <alternativeName>
        <fullName evidence="1">PLP-independent amino acid racemase</fullName>
    </alternativeName>
</protein>
<reference key="1">
    <citation type="journal article" date="2006" name="Genome Biol.">
        <title>Genomic analysis reveals that Pseudomonas aeruginosa virulence is combinatorial.</title>
        <authorList>
            <person name="Lee D.G."/>
            <person name="Urbach J.M."/>
            <person name="Wu G."/>
            <person name="Liberati N.T."/>
            <person name="Feinbaum R.L."/>
            <person name="Miyata S."/>
            <person name="Diggins L.T."/>
            <person name="He J."/>
            <person name="Saucier M."/>
            <person name="Deziel E."/>
            <person name="Friedman L."/>
            <person name="Li L."/>
            <person name="Grills G."/>
            <person name="Montgomery K."/>
            <person name="Kucherlapati R."/>
            <person name="Rahme L.G."/>
            <person name="Ausubel F.M."/>
        </authorList>
    </citation>
    <scope>NUCLEOTIDE SEQUENCE [LARGE SCALE GENOMIC DNA]</scope>
    <source>
        <strain>UCBPP-PA14</strain>
    </source>
</reference>
<keyword id="KW-0028">Amino-acid biosynthesis</keyword>
<keyword id="KW-0963">Cytoplasm</keyword>
<keyword id="KW-0413">Isomerase</keyword>
<keyword id="KW-0457">Lysine biosynthesis</keyword>
<accession>Q02E84</accession>
<gene>
    <name evidence="1" type="primary">dapF</name>
    <name type="ordered locus">PA14_69690</name>
</gene>
<comment type="function">
    <text evidence="1">Catalyzes the stereoinversion of LL-2,6-diaminopimelate (L,L-DAP) to meso-diaminopimelate (meso-DAP), a precursor of L-lysine and an essential component of the bacterial peptidoglycan.</text>
</comment>
<comment type="catalytic activity">
    <reaction evidence="1">
        <text>(2S,6S)-2,6-diaminopimelate = meso-2,6-diaminopimelate</text>
        <dbReference type="Rhea" id="RHEA:15393"/>
        <dbReference type="ChEBI" id="CHEBI:57609"/>
        <dbReference type="ChEBI" id="CHEBI:57791"/>
        <dbReference type="EC" id="5.1.1.7"/>
    </reaction>
</comment>
<comment type="pathway">
    <text evidence="1">Amino-acid biosynthesis; L-lysine biosynthesis via DAP pathway; DL-2,6-diaminopimelate from LL-2,6-diaminopimelate: step 1/1.</text>
</comment>
<comment type="subunit">
    <text evidence="1">Homodimer.</text>
</comment>
<comment type="subcellular location">
    <subcellularLocation>
        <location evidence="1">Cytoplasm</location>
    </subcellularLocation>
</comment>
<comment type="similarity">
    <text evidence="1">Belongs to the diaminopimelate epimerase family.</text>
</comment>
<sequence>MLLRFTKMHGLGNDFMVLDLVSQHAHVQPKHVKLWGDRNTGVGFDQLLIVEAPSSPDVDFRYRIFNADGSEVEQCGNGARCFARFVQDKRLTVKKSIRVETKGGIIELNIRPDGQVTVDMGPPRLAPAEIPFQAEREALSYEIEVNGQRVELAAVSMGNPHGVLRVENVDSAPVHSLGPQLEVHPRFPKKANIGFLQVLDPHHARLRVWERGVGETQACGTGACAAAVAGIRQGWLQSPVQIDLPGGRLHIEWAGPGQPVMMTGPAVRVYEGQVRL</sequence>
<proteinExistence type="inferred from homology"/>
<feature type="chain" id="PRO_1000011931" description="Diaminopimelate epimerase">
    <location>
        <begin position="1"/>
        <end position="276"/>
    </location>
</feature>
<feature type="active site" description="Proton donor" evidence="1">
    <location>
        <position position="75"/>
    </location>
</feature>
<feature type="active site" description="Proton acceptor" evidence="1">
    <location>
        <position position="219"/>
    </location>
</feature>
<feature type="binding site" evidence="1">
    <location>
        <position position="13"/>
    </location>
    <ligand>
        <name>substrate</name>
    </ligand>
</feature>
<feature type="binding site" evidence="1">
    <location>
        <position position="46"/>
    </location>
    <ligand>
        <name>substrate</name>
    </ligand>
</feature>
<feature type="binding site" evidence="1">
    <location>
        <position position="66"/>
    </location>
    <ligand>
        <name>substrate</name>
    </ligand>
</feature>
<feature type="binding site" evidence="1">
    <location>
        <begin position="76"/>
        <end position="77"/>
    </location>
    <ligand>
        <name>substrate</name>
    </ligand>
</feature>
<feature type="binding site" evidence="1">
    <location>
        <position position="159"/>
    </location>
    <ligand>
        <name>substrate</name>
    </ligand>
</feature>
<feature type="binding site" evidence="1">
    <location>
        <position position="192"/>
    </location>
    <ligand>
        <name>substrate</name>
    </ligand>
</feature>
<feature type="binding site" evidence="1">
    <location>
        <begin position="210"/>
        <end position="211"/>
    </location>
    <ligand>
        <name>substrate</name>
    </ligand>
</feature>
<feature type="binding site" evidence="1">
    <location>
        <begin position="220"/>
        <end position="221"/>
    </location>
    <ligand>
        <name>substrate</name>
    </ligand>
</feature>
<feature type="site" description="Could be important to modulate the pK values of the two catalytic cysteine residues" evidence="1">
    <location>
        <position position="161"/>
    </location>
</feature>
<feature type="site" description="Could be important to modulate the pK values of the two catalytic cysteine residues" evidence="1">
    <location>
        <position position="210"/>
    </location>
</feature>
<feature type="site" description="Important for dimerization" evidence="1">
    <location>
        <position position="270"/>
    </location>
</feature>
<name>DAPF_PSEAB</name>
<dbReference type="EC" id="5.1.1.7" evidence="1"/>
<dbReference type="EMBL" id="CP000438">
    <property type="protein sequence ID" value="ABJ14663.1"/>
    <property type="molecule type" value="Genomic_DNA"/>
</dbReference>
<dbReference type="RefSeq" id="WP_003098223.1">
    <property type="nucleotide sequence ID" value="NZ_CP034244.1"/>
</dbReference>
<dbReference type="SMR" id="Q02E84"/>
<dbReference type="KEGG" id="pau:PA14_69690"/>
<dbReference type="PseudoCAP" id="PA14_69690"/>
<dbReference type="HOGENOM" id="CLU_053306_1_1_6"/>
<dbReference type="BioCyc" id="PAER208963:G1G74-5871-MONOMER"/>
<dbReference type="UniPathway" id="UPA00034">
    <property type="reaction ID" value="UER00025"/>
</dbReference>
<dbReference type="Proteomes" id="UP000000653">
    <property type="component" value="Chromosome"/>
</dbReference>
<dbReference type="GO" id="GO:0005829">
    <property type="term" value="C:cytosol"/>
    <property type="evidence" value="ECO:0007669"/>
    <property type="project" value="TreeGrafter"/>
</dbReference>
<dbReference type="GO" id="GO:0008837">
    <property type="term" value="F:diaminopimelate epimerase activity"/>
    <property type="evidence" value="ECO:0007669"/>
    <property type="project" value="UniProtKB-UniRule"/>
</dbReference>
<dbReference type="GO" id="GO:0009089">
    <property type="term" value="P:lysine biosynthetic process via diaminopimelate"/>
    <property type="evidence" value="ECO:0007669"/>
    <property type="project" value="UniProtKB-UniRule"/>
</dbReference>
<dbReference type="FunFam" id="3.10.310.10:FF:000001">
    <property type="entry name" value="Diaminopimelate epimerase"/>
    <property type="match status" value="1"/>
</dbReference>
<dbReference type="FunFam" id="3.10.310.10:FF:000002">
    <property type="entry name" value="Diaminopimelate epimerase"/>
    <property type="match status" value="1"/>
</dbReference>
<dbReference type="Gene3D" id="3.10.310.10">
    <property type="entry name" value="Diaminopimelate Epimerase, Chain A, domain 1"/>
    <property type="match status" value="2"/>
</dbReference>
<dbReference type="HAMAP" id="MF_00197">
    <property type="entry name" value="DAP_epimerase"/>
    <property type="match status" value="1"/>
</dbReference>
<dbReference type="InterPro" id="IPR018510">
    <property type="entry name" value="DAP_epimerase_AS"/>
</dbReference>
<dbReference type="InterPro" id="IPR001653">
    <property type="entry name" value="DAP_epimerase_DapF"/>
</dbReference>
<dbReference type="NCBIfam" id="TIGR00652">
    <property type="entry name" value="DapF"/>
    <property type="match status" value="1"/>
</dbReference>
<dbReference type="PANTHER" id="PTHR31689:SF0">
    <property type="entry name" value="DIAMINOPIMELATE EPIMERASE"/>
    <property type="match status" value="1"/>
</dbReference>
<dbReference type="PANTHER" id="PTHR31689">
    <property type="entry name" value="DIAMINOPIMELATE EPIMERASE, CHLOROPLASTIC"/>
    <property type="match status" value="1"/>
</dbReference>
<dbReference type="Pfam" id="PF01678">
    <property type="entry name" value="DAP_epimerase"/>
    <property type="match status" value="2"/>
</dbReference>
<dbReference type="SUPFAM" id="SSF54506">
    <property type="entry name" value="Diaminopimelate epimerase-like"/>
    <property type="match status" value="1"/>
</dbReference>
<dbReference type="PROSITE" id="PS01326">
    <property type="entry name" value="DAP_EPIMERASE"/>
    <property type="match status" value="1"/>
</dbReference>